<name>FLUC1_PARMW</name>
<feature type="chain" id="PRO_0000110200" description="Fluoride-specific ion channel FluC 1">
    <location>
        <begin position="1"/>
        <end position="126"/>
    </location>
</feature>
<feature type="transmembrane region" description="Helical" evidence="1">
    <location>
        <begin position="37"/>
        <end position="57"/>
    </location>
</feature>
<feature type="transmembrane region" description="Helical" evidence="1">
    <location>
        <begin position="67"/>
        <end position="87"/>
    </location>
</feature>
<feature type="transmembrane region" description="Helical" evidence="1">
    <location>
        <begin position="98"/>
        <end position="118"/>
    </location>
</feature>
<feature type="binding site" evidence="1">
    <location>
        <position position="77"/>
    </location>
    <ligand>
        <name>Na(+)</name>
        <dbReference type="ChEBI" id="CHEBI:29101"/>
        <note>structural</note>
    </ligand>
</feature>
<feature type="binding site" evidence="1">
    <location>
        <position position="80"/>
    </location>
    <ligand>
        <name>Na(+)</name>
        <dbReference type="ChEBI" id="CHEBI:29101"/>
        <note>structural</note>
    </ligand>
</feature>
<keyword id="KW-0997">Cell inner membrane</keyword>
<keyword id="KW-1003">Cell membrane</keyword>
<keyword id="KW-0407">Ion channel</keyword>
<keyword id="KW-0406">Ion transport</keyword>
<keyword id="KW-0472">Membrane</keyword>
<keyword id="KW-0479">Metal-binding</keyword>
<keyword id="KW-0915">Sodium</keyword>
<keyword id="KW-0812">Transmembrane</keyword>
<keyword id="KW-1133">Transmembrane helix</keyword>
<keyword id="KW-0813">Transport</keyword>
<comment type="function">
    <text evidence="1">Fluoride-specific ion channel. Important for reducing fluoride concentration in the cell, thus reducing its toxicity.</text>
</comment>
<comment type="catalytic activity">
    <reaction evidence="1">
        <text>fluoride(in) = fluoride(out)</text>
        <dbReference type="Rhea" id="RHEA:76159"/>
        <dbReference type="ChEBI" id="CHEBI:17051"/>
    </reaction>
    <physiologicalReaction direction="left-to-right" evidence="1">
        <dbReference type="Rhea" id="RHEA:76160"/>
    </physiologicalReaction>
</comment>
<comment type="activity regulation">
    <text evidence="1">Na(+) is not transported, but it plays an essential structural role and its presence is essential for fluoride channel function.</text>
</comment>
<comment type="subcellular location">
    <subcellularLocation>
        <location evidence="1">Cell inner membrane</location>
        <topology evidence="1">Multi-pass membrane protein</topology>
    </subcellularLocation>
</comment>
<comment type="similarity">
    <text evidence="1">Belongs to the fluoride channel Fluc/FEX (TC 1.A.43) family.</text>
</comment>
<organism>
    <name type="scientific">Parasynechococcus marenigrum (strain WH8102)</name>
    <dbReference type="NCBI Taxonomy" id="84588"/>
    <lineage>
        <taxon>Bacteria</taxon>
        <taxon>Bacillati</taxon>
        <taxon>Cyanobacteriota</taxon>
        <taxon>Cyanophyceae</taxon>
        <taxon>Synechococcales</taxon>
        <taxon>Prochlorococcaceae</taxon>
        <taxon>Parasynechococcus</taxon>
        <taxon>Parasynechococcus marenigrum</taxon>
    </lineage>
</organism>
<accession>Q7UA05</accession>
<reference key="1">
    <citation type="journal article" date="2003" name="Nature">
        <title>The genome of a motile marine Synechococcus.</title>
        <authorList>
            <person name="Palenik B."/>
            <person name="Brahamsha B."/>
            <person name="Larimer F.W."/>
            <person name="Land M.L."/>
            <person name="Hauser L."/>
            <person name="Chain P."/>
            <person name="Lamerdin J.E."/>
            <person name="Regala W."/>
            <person name="Allen E.E."/>
            <person name="McCarren J."/>
            <person name="Paulsen I.T."/>
            <person name="Dufresne A."/>
            <person name="Partensky F."/>
            <person name="Webb E.A."/>
            <person name="Waterbury J."/>
        </authorList>
    </citation>
    <scope>NUCLEOTIDE SEQUENCE [LARGE SCALE GENOMIC DNA]</scope>
    <source>
        <strain>WH8102</strain>
    </source>
</reference>
<gene>
    <name evidence="1" type="primary">fluC1</name>
    <name evidence="1" type="synonym">crcB1</name>
    <name type="ordered locus">SYNW0097</name>
</gene>
<dbReference type="EMBL" id="BX569689">
    <property type="protein sequence ID" value="CAE06612.1"/>
    <property type="molecule type" value="Genomic_DNA"/>
</dbReference>
<dbReference type="RefSeq" id="WP_011126975.1">
    <property type="nucleotide sequence ID" value="NC_005070.1"/>
</dbReference>
<dbReference type="SMR" id="Q7UA05"/>
<dbReference type="STRING" id="84588.SYNW0097"/>
<dbReference type="KEGG" id="syw:SYNW0097"/>
<dbReference type="eggNOG" id="COG0239">
    <property type="taxonomic scope" value="Bacteria"/>
</dbReference>
<dbReference type="HOGENOM" id="CLU_114342_2_1_3"/>
<dbReference type="Proteomes" id="UP000001422">
    <property type="component" value="Chromosome"/>
</dbReference>
<dbReference type="GO" id="GO:0005886">
    <property type="term" value="C:plasma membrane"/>
    <property type="evidence" value="ECO:0007669"/>
    <property type="project" value="UniProtKB-SubCell"/>
</dbReference>
<dbReference type="GO" id="GO:0062054">
    <property type="term" value="F:fluoride channel activity"/>
    <property type="evidence" value="ECO:0007669"/>
    <property type="project" value="UniProtKB-UniRule"/>
</dbReference>
<dbReference type="GO" id="GO:0046872">
    <property type="term" value="F:metal ion binding"/>
    <property type="evidence" value="ECO:0007669"/>
    <property type="project" value="UniProtKB-KW"/>
</dbReference>
<dbReference type="GO" id="GO:0140114">
    <property type="term" value="P:cellular detoxification of fluoride"/>
    <property type="evidence" value="ECO:0007669"/>
    <property type="project" value="UniProtKB-UniRule"/>
</dbReference>
<dbReference type="HAMAP" id="MF_00454">
    <property type="entry name" value="FluC"/>
    <property type="match status" value="1"/>
</dbReference>
<dbReference type="InterPro" id="IPR003691">
    <property type="entry name" value="FluC"/>
</dbReference>
<dbReference type="PANTHER" id="PTHR28259">
    <property type="entry name" value="FLUORIDE EXPORT PROTEIN 1-RELATED"/>
    <property type="match status" value="1"/>
</dbReference>
<dbReference type="PANTHER" id="PTHR28259:SF1">
    <property type="entry name" value="FLUORIDE EXPORT PROTEIN 1-RELATED"/>
    <property type="match status" value="1"/>
</dbReference>
<dbReference type="Pfam" id="PF02537">
    <property type="entry name" value="CRCB"/>
    <property type="match status" value="1"/>
</dbReference>
<proteinExistence type="inferred from homology"/>
<protein>
    <recommendedName>
        <fullName evidence="1">Fluoride-specific ion channel FluC 1</fullName>
    </recommendedName>
</protein>
<sequence length="126" mass="12749">MAGSAPEALLVGLGAIPGAWLRLKVVNHFEPMVPKKHWGTLLVNVISSFALGLVLALDETCSASSGIALLMGVGFFGTLSTFSTFVVELLNELRAGHLLAAAALAVISIVAGLIAAAAGYGLGAYG</sequence>
<evidence type="ECO:0000255" key="1">
    <source>
        <dbReference type="HAMAP-Rule" id="MF_00454"/>
    </source>
</evidence>